<name>HIS4_XYLFT</name>
<reference key="1">
    <citation type="journal article" date="2003" name="J. Bacteriol.">
        <title>Comparative analyses of the complete genome sequences of Pierce's disease and citrus variegated chlorosis strains of Xylella fastidiosa.</title>
        <authorList>
            <person name="Van Sluys M.A."/>
            <person name="de Oliveira M.C."/>
            <person name="Monteiro-Vitorello C.B."/>
            <person name="Miyaki C.Y."/>
            <person name="Furlan L.R."/>
            <person name="Camargo L.E.A."/>
            <person name="da Silva A.C.R."/>
            <person name="Moon D.H."/>
            <person name="Takita M.A."/>
            <person name="Lemos E.G.M."/>
            <person name="Machado M.A."/>
            <person name="Ferro M.I.T."/>
            <person name="da Silva F.R."/>
            <person name="Goldman M.H.S."/>
            <person name="Goldman G.H."/>
            <person name="Lemos M.V.F."/>
            <person name="El-Dorry H."/>
            <person name="Tsai S.M."/>
            <person name="Carrer H."/>
            <person name="Carraro D.M."/>
            <person name="de Oliveira R.C."/>
            <person name="Nunes L.R."/>
            <person name="Siqueira W.J."/>
            <person name="Coutinho L.L."/>
            <person name="Kimura E.T."/>
            <person name="Ferro E.S."/>
            <person name="Harakava R."/>
            <person name="Kuramae E.E."/>
            <person name="Marino C.L."/>
            <person name="Giglioti E."/>
            <person name="Abreu I.L."/>
            <person name="Alves L.M.C."/>
            <person name="do Amaral A.M."/>
            <person name="Baia G.S."/>
            <person name="Blanco S.R."/>
            <person name="Brito M.S."/>
            <person name="Cannavan F.S."/>
            <person name="Celestino A.V."/>
            <person name="da Cunha A.F."/>
            <person name="Fenille R.C."/>
            <person name="Ferro J.A."/>
            <person name="Formighieri E.F."/>
            <person name="Kishi L.T."/>
            <person name="Leoni S.G."/>
            <person name="Oliveira A.R."/>
            <person name="Rosa V.E. Jr."/>
            <person name="Sassaki F.T."/>
            <person name="Sena J.A.D."/>
            <person name="de Souza A.A."/>
            <person name="Truffi D."/>
            <person name="Tsukumo F."/>
            <person name="Yanai G.M."/>
            <person name="Zaros L.G."/>
            <person name="Civerolo E.L."/>
            <person name="Simpson A.J.G."/>
            <person name="Almeida N.F. Jr."/>
            <person name="Setubal J.C."/>
            <person name="Kitajima J.P."/>
        </authorList>
    </citation>
    <scope>NUCLEOTIDE SEQUENCE [LARGE SCALE GENOMIC DNA]</scope>
    <source>
        <strain>Temecula1 / ATCC 700964</strain>
    </source>
</reference>
<sequence>MNFIVYPALDIRNGAVVRLQQGDYARQTRYDDQVLPRAQAFADSGATWMHLVDLDAAKAGGYTLAPLLRQITRATGLQVQTGGGVRSRDDVARILDAGAARVVIGSLAVRQMTCVIEWLQAFGPERITVALDTRQDAGGVWRLPVHGWTEVAEATLEALAQQYAAAGLRHLLCTDIARDGMLSGPNMDVYAYLRALVPAVQIQVSGGARDVADVVAAKMAGCAGIVLGKALLEGRLALKEAVQHGSVADPGDPLPCGELTEPVCRYRSV</sequence>
<feature type="chain" id="PRO_0000142079" description="1-(5-phosphoribosyl)-5-[(5-phosphoribosylamino)methylideneamino] imidazole-4-carboxamide isomerase">
    <location>
        <begin position="1"/>
        <end position="269"/>
    </location>
</feature>
<feature type="active site" description="Proton acceptor" evidence="1">
    <location>
        <position position="10"/>
    </location>
</feature>
<feature type="active site" description="Proton donor" evidence="1">
    <location>
        <position position="132"/>
    </location>
</feature>
<dbReference type="EC" id="5.3.1.16" evidence="1"/>
<dbReference type="EMBL" id="AE009442">
    <property type="protein sequence ID" value="AAO29112.1"/>
    <property type="molecule type" value="Genomic_DNA"/>
</dbReference>
<dbReference type="RefSeq" id="WP_004088318.1">
    <property type="nucleotide sequence ID" value="NC_004556.1"/>
</dbReference>
<dbReference type="SMR" id="Q87C33"/>
<dbReference type="GeneID" id="93905074"/>
<dbReference type="KEGG" id="xft:PD_1263"/>
<dbReference type="HOGENOM" id="CLU_048577_1_2_6"/>
<dbReference type="UniPathway" id="UPA00031">
    <property type="reaction ID" value="UER00009"/>
</dbReference>
<dbReference type="Proteomes" id="UP000002516">
    <property type="component" value="Chromosome"/>
</dbReference>
<dbReference type="GO" id="GO:0005737">
    <property type="term" value="C:cytoplasm"/>
    <property type="evidence" value="ECO:0007669"/>
    <property type="project" value="UniProtKB-SubCell"/>
</dbReference>
<dbReference type="GO" id="GO:0003949">
    <property type="term" value="F:1-(5-phosphoribosyl)-5-[(5-phosphoribosylamino)methylideneamino]imidazole-4-carboxamide isomerase activity"/>
    <property type="evidence" value="ECO:0007669"/>
    <property type="project" value="UniProtKB-UniRule"/>
</dbReference>
<dbReference type="GO" id="GO:0000105">
    <property type="term" value="P:L-histidine biosynthetic process"/>
    <property type="evidence" value="ECO:0007669"/>
    <property type="project" value="UniProtKB-UniRule"/>
</dbReference>
<dbReference type="GO" id="GO:0000162">
    <property type="term" value="P:L-tryptophan biosynthetic process"/>
    <property type="evidence" value="ECO:0007669"/>
    <property type="project" value="TreeGrafter"/>
</dbReference>
<dbReference type="CDD" id="cd04732">
    <property type="entry name" value="HisA"/>
    <property type="match status" value="1"/>
</dbReference>
<dbReference type="FunFam" id="3.20.20.70:FF:000009">
    <property type="entry name" value="1-(5-phosphoribosyl)-5-[(5-phosphoribosylamino)methylideneamino] imidazole-4-carboxamide isomerase"/>
    <property type="match status" value="1"/>
</dbReference>
<dbReference type="Gene3D" id="3.20.20.70">
    <property type="entry name" value="Aldolase class I"/>
    <property type="match status" value="1"/>
</dbReference>
<dbReference type="HAMAP" id="MF_01014">
    <property type="entry name" value="HisA"/>
    <property type="match status" value="1"/>
</dbReference>
<dbReference type="InterPro" id="IPR013785">
    <property type="entry name" value="Aldolase_TIM"/>
</dbReference>
<dbReference type="InterPro" id="IPR006062">
    <property type="entry name" value="His_biosynth"/>
</dbReference>
<dbReference type="InterPro" id="IPR006063">
    <property type="entry name" value="HisA_bact_arch"/>
</dbReference>
<dbReference type="InterPro" id="IPR044524">
    <property type="entry name" value="Isoase_HisA-like"/>
</dbReference>
<dbReference type="InterPro" id="IPR023016">
    <property type="entry name" value="Isoase_HisA-like_bact"/>
</dbReference>
<dbReference type="InterPro" id="IPR011060">
    <property type="entry name" value="RibuloseP-bd_barrel"/>
</dbReference>
<dbReference type="NCBIfam" id="TIGR00007">
    <property type="entry name" value="1-(5-phosphoribosyl)-5-[(5-phosphoribosylamino)methylideneamino]imidazole-4-carboxamide isomerase"/>
    <property type="match status" value="1"/>
</dbReference>
<dbReference type="PANTHER" id="PTHR43090">
    <property type="entry name" value="1-(5-PHOSPHORIBOSYL)-5-[(5-PHOSPHORIBOSYLAMINO)METHYLIDENEAMINO] IMIDAZOLE-4-CARBOXAMIDE ISOMERASE"/>
    <property type="match status" value="1"/>
</dbReference>
<dbReference type="PANTHER" id="PTHR43090:SF2">
    <property type="entry name" value="1-(5-PHOSPHORIBOSYL)-5-[(5-PHOSPHORIBOSYLAMINO)METHYLIDENEAMINO] IMIDAZOLE-4-CARBOXAMIDE ISOMERASE"/>
    <property type="match status" value="1"/>
</dbReference>
<dbReference type="Pfam" id="PF00977">
    <property type="entry name" value="His_biosynth"/>
    <property type="match status" value="1"/>
</dbReference>
<dbReference type="SUPFAM" id="SSF51366">
    <property type="entry name" value="Ribulose-phoshate binding barrel"/>
    <property type="match status" value="1"/>
</dbReference>
<accession>Q87C33</accession>
<organism>
    <name type="scientific">Xylella fastidiosa (strain Temecula1 / ATCC 700964)</name>
    <dbReference type="NCBI Taxonomy" id="183190"/>
    <lineage>
        <taxon>Bacteria</taxon>
        <taxon>Pseudomonadati</taxon>
        <taxon>Pseudomonadota</taxon>
        <taxon>Gammaproteobacteria</taxon>
        <taxon>Lysobacterales</taxon>
        <taxon>Lysobacteraceae</taxon>
        <taxon>Xylella</taxon>
    </lineage>
</organism>
<proteinExistence type="inferred from homology"/>
<keyword id="KW-0028">Amino-acid biosynthesis</keyword>
<keyword id="KW-0963">Cytoplasm</keyword>
<keyword id="KW-0368">Histidine biosynthesis</keyword>
<keyword id="KW-0413">Isomerase</keyword>
<keyword id="KW-1185">Reference proteome</keyword>
<gene>
    <name evidence="1" type="primary">hisA</name>
    <name type="ordered locus">PD_1263</name>
</gene>
<comment type="catalytic activity">
    <reaction evidence="1">
        <text>1-(5-phospho-beta-D-ribosyl)-5-[(5-phospho-beta-D-ribosylamino)methylideneamino]imidazole-4-carboxamide = 5-[(5-phospho-1-deoxy-D-ribulos-1-ylimino)methylamino]-1-(5-phospho-beta-D-ribosyl)imidazole-4-carboxamide</text>
        <dbReference type="Rhea" id="RHEA:15469"/>
        <dbReference type="ChEBI" id="CHEBI:58435"/>
        <dbReference type="ChEBI" id="CHEBI:58525"/>
        <dbReference type="EC" id="5.3.1.16"/>
    </reaction>
</comment>
<comment type="pathway">
    <text evidence="1">Amino-acid biosynthesis; L-histidine biosynthesis; L-histidine from 5-phospho-alpha-D-ribose 1-diphosphate: step 4/9.</text>
</comment>
<comment type="subcellular location">
    <subcellularLocation>
        <location evidence="1">Cytoplasm</location>
    </subcellularLocation>
</comment>
<comment type="similarity">
    <text evidence="1">Belongs to the HisA/HisF family.</text>
</comment>
<protein>
    <recommendedName>
        <fullName evidence="1">1-(5-phosphoribosyl)-5-[(5-phosphoribosylamino)methylideneamino] imidazole-4-carboxamide isomerase</fullName>
        <ecNumber evidence="1">5.3.1.16</ecNumber>
    </recommendedName>
    <alternativeName>
        <fullName evidence="1">Phosphoribosylformimino-5-aminoimidazole carboxamide ribotide isomerase</fullName>
    </alternativeName>
</protein>
<evidence type="ECO:0000255" key="1">
    <source>
        <dbReference type="HAMAP-Rule" id="MF_01014"/>
    </source>
</evidence>